<proteinExistence type="evidence at transcript level"/>
<keyword id="KW-0025">Alternative splicing</keyword>
<keyword id="KW-1003">Cell membrane</keyword>
<keyword id="KW-0966">Cell projection</keyword>
<keyword id="KW-0969">Cilium</keyword>
<keyword id="KW-0217">Developmental protein</keyword>
<keyword id="KW-0221">Differentiation</keyword>
<keyword id="KW-1015">Disulfide bond</keyword>
<keyword id="KW-0282">Flagellum</keyword>
<keyword id="KW-0325">Glycoprotein</keyword>
<keyword id="KW-0472">Membrane</keyword>
<keyword id="KW-1185">Reference proteome</keyword>
<keyword id="KW-0732">Signal</keyword>
<keyword id="KW-0744">Spermatogenesis</keyword>
<keyword id="KW-0812">Transmembrane</keyword>
<keyword id="KW-1133">Transmembrane helix</keyword>
<accession>B5DFM7</accession>
<accession>A0A0H2UI41</accession>
<feature type="signal peptide" evidence="3">
    <location>
        <begin position="1"/>
        <end position="15"/>
    </location>
</feature>
<feature type="chain" id="PRO_0000416885" description="Cation channel sperm-associated auxiliary subunit delta">
    <location>
        <begin position="16"/>
        <end position="803"/>
    </location>
</feature>
<feature type="topological domain" description="Extracellular" evidence="1">
    <location>
        <begin position="16"/>
        <end position="720"/>
    </location>
</feature>
<feature type="transmembrane region" description="Helical" evidence="1">
    <location>
        <begin position="721"/>
        <end position="742"/>
    </location>
</feature>
<feature type="topological domain" description="Cytoplasmic" evidence="1">
    <location>
        <begin position="743"/>
        <end position="803"/>
    </location>
</feature>
<feature type="region of interest" description="Disordered" evidence="4">
    <location>
        <begin position="782"/>
        <end position="803"/>
    </location>
</feature>
<feature type="glycosylation site" description="N-linked (GlcNAc...) asparagine" evidence="3">
    <location>
        <position position="226"/>
    </location>
</feature>
<feature type="glycosylation site" description="N-linked (GlcNAc...) asparagine" evidence="3">
    <location>
        <position position="418"/>
    </location>
</feature>
<feature type="glycosylation site" description="N-linked (GlcNAc...) asparagine" evidence="3">
    <location>
        <position position="436"/>
    </location>
</feature>
<feature type="glycosylation site" description="N-linked (GlcNAc...) asparagine" evidence="3">
    <location>
        <position position="468"/>
    </location>
</feature>
<feature type="glycosylation site" description="N-linked (GlcNAc...) asparagine" evidence="3">
    <location>
        <position position="534"/>
    </location>
</feature>
<feature type="glycosylation site" description="N-linked (GlcNAc...) asparagine" evidence="3">
    <location>
        <position position="545"/>
    </location>
</feature>
<feature type="glycosylation site" description="N-linked (GlcNAc...) asparagine" evidence="3">
    <location>
        <position position="626"/>
    </location>
</feature>
<feature type="disulfide bond" evidence="1">
    <location>
        <begin position="19"/>
        <end position="365"/>
    </location>
</feature>
<feature type="disulfide bond" evidence="1">
    <location>
        <begin position="55"/>
        <end position="142"/>
    </location>
</feature>
<feature type="disulfide bond" evidence="1">
    <location>
        <begin position="141"/>
        <end position="148"/>
    </location>
</feature>
<feature type="disulfide bond" evidence="1">
    <location>
        <begin position="383"/>
        <end position="492"/>
    </location>
</feature>
<feature type="disulfide bond" evidence="1">
    <location>
        <begin position="506"/>
        <end position="698"/>
    </location>
</feature>
<feature type="disulfide bond" evidence="1">
    <location>
        <begin position="521"/>
        <end position="568"/>
    </location>
</feature>
<feature type="disulfide bond" evidence="1">
    <location>
        <begin position="620"/>
        <end position="648"/>
    </location>
</feature>
<feature type="splice variant" id="VSP_061421" description="In isoform 2." evidence="5">
    <original>SYCDLNTIFSVYVYGALP</original>
    <variation>RYSSTAQGSAPVLGFGAK</variation>
    <location>
        <begin position="696"/>
        <end position="713"/>
    </location>
</feature>
<feature type="splice variant" id="VSP_061422" description="In isoform 2." evidence="5">
    <location>
        <begin position="714"/>
        <end position="803"/>
    </location>
</feature>
<comment type="function">
    <text evidence="1">Auxiliary component of the CatSper complex, a complex involved in sperm cell hyperactivation. Sperm cell hyperactivation is needed for sperm motility which is essential late in the preparation of sperm for fertilization. Required for CATSPER1 stability before intraflagellar transport and/or incorporation of the CatSper complex channel into the flagellar membrane.</text>
</comment>
<comment type="subunit">
    <text evidence="1 2">Component of the CatSper complex or CatSpermasome composed of the core pore-forming members CATSPER1, CATSPER2, CATSPER3 and CATSPER4 as well as auxiliary members CATSPERB, CATSPERG, CATSPERD, CATSPERE, CATSPERZ, C2CD6/CATSPERT, SLCO6C1, TMEM249, TMEM262 and EFCAB9 (By similarity). HSPA1 may be an additional auxiliary complex member (By similarity). The core complex members CATSPER1, CATSPER2, CATSPER3 and CATSPER4 form a heterotetrameric channel. The auxiliary CATSPERB, CATSPERG, CATSPERD and CATSPERE subunits form a pavilion-like structure over the pore which stabilizes the complex through interactions with CATSPER4, CATSPER3, CATSPER1 and CATSPER2 respectively. SLCO6C1 interacts with CATSPERE and TMEM262/CATSPERH interacts with CATSPERB, further stabilizing the complex. C2CD6/CATSPERT interacts at least with CATSPERD and is required for targeting the CatSper complex in the flagellar membrane (By similarity).</text>
</comment>
<comment type="subcellular location">
    <subcellularLocation>
        <location evidence="1">Cell projection</location>
        <location evidence="1">Cilium</location>
        <location evidence="1">Flagellum membrane</location>
        <topology evidence="3">Single-pass type I membrane protein</topology>
    </subcellularLocation>
    <text evidence="1">Specifically located in the principal piece of sperm tail.</text>
</comment>
<comment type="alternative products">
    <event type="alternative splicing"/>
    <isoform>
        <id>B5DFM7-1</id>
        <name>1</name>
        <sequence type="displayed"/>
    </isoform>
    <isoform>
        <id>B5DFM7-2</id>
        <name>2</name>
        <sequence type="described" ref="VSP_061421 VSP_061422"/>
    </isoform>
</comment>
<comment type="similarity">
    <text evidence="5">Belongs to the CATSPERD family.</text>
</comment>
<sequence length="803" mass="91436">MLMLMLAAVATVVRAQTVCRFRTVRTGKVFANPVTLEGDLLFYAFSNTVVVKNVCKTDIAVYLGQRVFITKNRFEASILPLTIPKSMEVKMPSITSAHFVSDAMILFVIDGKVYSYNFIEDIWRTVNGITEPVSHISGDPCCFEGYFCLELSNNLFAYFRGGQMPGTNIYFSNNGGFSFELLNSDRMSHLKGLLGGIFHFHSLSQVGILLVENNLGTFHYLEYPLNHSTGVPFLYESPLEVIIKPQQRGFLILWNQKTLLVSSNSGQIVEAMQLMEEGNINDLNVEHAKLTIHSIASNTYELAFLVEQDQLYYGSQSYMGNYIIKLSNQQFWSEEASVHFWDVGMLEVLTPVSDPYFPAFDFKKCLVNVQLALMDQSLQLEPCNVEFLESTMEDRMFIIDMNSKLKLSALMVPRKGMNPTPLVMVSNPHALGFKANLTQFGNMYDGNSKFKLDIELQQQQHWGNSELNFTASIKHEAISSITVDIADKTLSCVDLKPLSTLISVGCDLTKKVIVQNKISACAMGILDPVLLQKNYSYTIEKEAYNPTSYSGEAQDDLIVFYQYKELGCPRLVYYDKPWKPVVELWKDGTLEEIMNAEYVILELNGIVTYSYSLTAATAHCRSQPQNWSIFKEDAEKPSLWNRETYVSCHEDNQDNPLLWPNVEYQILGGRTDNKIIFGQRNGIYTFYLTVVDPYYSYCDLNTIFSVYVYGALPVAEFRPMTSILLMVTVTLFTMWLAYAIPKQLRTERGRRLTGFCFQIFKYCPGICTCAWLRGKMRRGLRSRRVKDQPEKIPQIGKKPDIKK</sequence>
<organism>
    <name type="scientific">Rattus norvegicus</name>
    <name type="common">Rat</name>
    <dbReference type="NCBI Taxonomy" id="10116"/>
    <lineage>
        <taxon>Eukaryota</taxon>
        <taxon>Metazoa</taxon>
        <taxon>Chordata</taxon>
        <taxon>Craniata</taxon>
        <taxon>Vertebrata</taxon>
        <taxon>Euteleostomi</taxon>
        <taxon>Mammalia</taxon>
        <taxon>Eutheria</taxon>
        <taxon>Euarchontoglires</taxon>
        <taxon>Glires</taxon>
        <taxon>Rodentia</taxon>
        <taxon>Myomorpha</taxon>
        <taxon>Muroidea</taxon>
        <taxon>Muridae</taxon>
        <taxon>Murinae</taxon>
        <taxon>Rattus</taxon>
    </lineage>
</organism>
<gene>
    <name evidence="7" type="primary">Catsperd</name>
    <name type="synonym">Tmem146</name>
</gene>
<evidence type="ECO:0000250" key="1">
    <source>
        <dbReference type="UniProtKB" id="E9Q9F6"/>
    </source>
</evidence>
<evidence type="ECO:0000250" key="2">
    <source>
        <dbReference type="UniProtKB" id="Q91ZR5"/>
    </source>
</evidence>
<evidence type="ECO:0000255" key="3"/>
<evidence type="ECO:0000256" key="4">
    <source>
        <dbReference type="SAM" id="MobiDB-lite"/>
    </source>
</evidence>
<evidence type="ECO:0000305" key="5"/>
<evidence type="ECO:0000312" key="6">
    <source>
        <dbReference type="Proteomes" id="UP000002494"/>
    </source>
</evidence>
<evidence type="ECO:0000312" key="7">
    <source>
        <dbReference type="RGD" id="1594167"/>
    </source>
</evidence>
<reference evidence="6" key="1">
    <citation type="journal article" date="2004" name="Nature">
        <title>Genome sequence of the Brown Norway rat yields insights into mammalian evolution.</title>
        <authorList>
            <person name="Gibbs R.A."/>
            <person name="Weinstock G.M."/>
            <person name="Metzker M.L."/>
            <person name="Muzny D.M."/>
            <person name="Sodergren E.J."/>
            <person name="Scherer S."/>
            <person name="Scott G."/>
            <person name="Steffen D."/>
            <person name="Worley K.C."/>
            <person name="Burch P.E."/>
            <person name="Okwuonu G."/>
            <person name="Hines S."/>
            <person name="Lewis L."/>
            <person name="Deramo C."/>
            <person name="Delgado O."/>
            <person name="Dugan-Rocha S."/>
            <person name="Miner G."/>
            <person name="Morgan M."/>
            <person name="Hawes A."/>
            <person name="Gill R."/>
            <person name="Holt R.A."/>
            <person name="Adams M.D."/>
            <person name="Amanatides P.G."/>
            <person name="Baden-Tillson H."/>
            <person name="Barnstead M."/>
            <person name="Chin S."/>
            <person name="Evans C.A."/>
            <person name="Ferriera S."/>
            <person name="Fosler C."/>
            <person name="Glodek A."/>
            <person name="Gu Z."/>
            <person name="Jennings D."/>
            <person name="Kraft C.L."/>
            <person name="Nguyen T."/>
            <person name="Pfannkoch C.M."/>
            <person name="Sitter C."/>
            <person name="Sutton G.G."/>
            <person name="Venter J.C."/>
            <person name="Woodage T."/>
            <person name="Smith D."/>
            <person name="Lee H.-M."/>
            <person name="Gustafson E."/>
            <person name="Cahill P."/>
            <person name="Kana A."/>
            <person name="Doucette-Stamm L."/>
            <person name="Weinstock K."/>
            <person name="Fechtel K."/>
            <person name="Weiss R.B."/>
            <person name="Dunn D.M."/>
            <person name="Green E.D."/>
            <person name="Blakesley R.W."/>
            <person name="Bouffard G.G."/>
            <person name="De Jong P.J."/>
            <person name="Osoegawa K."/>
            <person name="Zhu B."/>
            <person name="Marra M."/>
            <person name="Schein J."/>
            <person name="Bosdet I."/>
            <person name="Fjell C."/>
            <person name="Jones S."/>
            <person name="Krzywinski M."/>
            <person name="Mathewson C."/>
            <person name="Siddiqui A."/>
            <person name="Wye N."/>
            <person name="McPherson J."/>
            <person name="Zhao S."/>
            <person name="Fraser C.M."/>
            <person name="Shetty J."/>
            <person name="Shatsman S."/>
            <person name="Geer K."/>
            <person name="Chen Y."/>
            <person name="Abramzon S."/>
            <person name="Nierman W.C."/>
            <person name="Havlak P.H."/>
            <person name="Chen R."/>
            <person name="Durbin K.J."/>
            <person name="Egan A."/>
            <person name="Ren Y."/>
            <person name="Song X.-Z."/>
            <person name="Li B."/>
            <person name="Liu Y."/>
            <person name="Qin X."/>
            <person name="Cawley S."/>
            <person name="Cooney A.J."/>
            <person name="D'Souza L.M."/>
            <person name="Martin K."/>
            <person name="Wu J.Q."/>
            <person name="Gonzalez-Garay M.L."/>
            <person name="Jackson A.R."/>
            <person name="Kalafus K.J."/>
            <person name="McLeod M.P."/>
            <person name="Milosavljevic A."/>
            <person name="Virk D."/>
            <person name="Volkov A."/>
            <person name="Wheeler D.A."/>
            <person name="Zhang Z."/>
            <person name="Bailey J.A."/>
            <person name="Eichler E.E."/>
            <person name="Tuzun E."/>
            <person name="Birney E."/>
            <person name="Mongin E."/>
            <person name="Ureta-Vidal A."/>
            <person name="Woodwark C."/>
            <person name="Zdobnov E."/>
            <person name="Bork P."/>
            <person name="Suyama M."/>
            <person name="Torrents D."/>
            <person name="Alexandersson M."/>
            <person name="Trask B.J."/>
            <person name="Young J.M."/>
            <person name="Huang H."/>
            <person name="Wang H."/>
            <person name="Xing H."/>
            <person name="Daniels S."/>
            <person name="Gietzen D."/>
            <person name="Schmidt J."/>
            <person name="Stevens K."/>
            <person name="Vitt U."/>
            <person name="Wingrove J."/>
            <person name="Camara F."/>
            <person name="Mar Alba M."/>
            <person name="Abril J.F."/>
            <person name="Guigo R."/>
            <person name="Smit A."/>
            <person name="Dubchak I."/>
            <person name="Rubin E.M."/>
            <person name="Couronne O."/>
            <person name="Poliakov A."/>
            <person name="Huebner N."/>
            <person name="Ganten D."/>
            <person name="Goesele C."/>
            <person name="Hummel O."/>
            <person name="Kreitler T."/>
            <person name="Lee Y.-A."/>
            <person name="Monti J."/>
            <person name="Schulz H."/>
            <person name="Zimdahl H."/>
            <person name="Himmelbauer H."/>
            <person name="Lehrach H."/>
            <person name="Jacob H.J."/>
            <person name="Bromberg S."/>
            <person name="Gullings-Handley J."/>
            <person name="Jensen-Seaman M.I."/>
            <person name="Kwitek A.E."/>
            <person name="Lazar J."/>
            <person name="Pasko D."/>
            <person name="Tonellato P.J."/>
            <person name="Twigger S."/>
            <person name="Ponting C.P."/>
            <person name="Duarte J.M."/>
            <person name="Rice S."/>
            <person name="Goodstadt L."/>
            <person name="Beatson S.A."/>
            <person name="Emes R.D."/>
            <person name="Winter E.E."/>
            <person name="Webber C."/>
            <person name="Brandt P."/>
            <person name="Nyakatura G."/>
            <person name="Adetobi M."/>
            <person name="Chiaromonte F."/>
            <person name="Elnitski L."/>
            <person name="Eswara P."/>
            <person name="Hardison R.C."/>
            <person name="Hou M."/>
            <person name="Kolbe D."/>
            <person name="Makova K."/>
            <person name="Miller W."/>
            <person name="Nekrutenko A."/>
            <person name="Riemer C."/>
            <person name="Schwartz S."/>
            <person name="Taylor J."/>
            <person name="Yang S."/>
            <person name="Zhang Y."/>
            <person name="Lindpaintner K."/>
            <person name="Andrews T.D."/>
            <person name="Caccamo M."/>
            <person name="Clamp M."/>
            <person name="Clarke L."/>
            <person name="Curwen V."/>
            <person name="Durbin R.M."/>
            <person name="Eyras E."/>
            <person name="Searle S.M."/>
            <person name="Cooper G.M."/>
            <person name="Batzoglou S."/>
            <person name="Brudno M."/>
            <person name="Sidow A."/>
            <person name="Stone E.A."/>
            <person name="Payseur B.A."/>
            <person name="Bourque G."/>
            <person name="Lopez-Otin C."/>
            <person name="Puente X.S."/>
            <person name="Chakrabarti K."/>
            <person name="Chatterji S."/>
            <person name="Dewey C."/>
            <person name="Pachter L."/>
            <person name="Bray N."/>
            <person name="Yap V.B."/>
            <person name="Caspi A."/>
            <person name="Tesler G."/>
            <person name="Pevzner P.A."/>
            <person name="Haussler D."/>
            <person name="Roskin K.M."/>
            <person name="Baertsch R."/>
            <person name="Clawson H."/>
            <person name="Furey T.S."/>
            <person name="Hinrichs A.S."/>
            <person name="Karolchik D."/>
            <person name="Kent W.J."/>
            <person name="Rosenbloom K.R."/>
            <person name="Trumbower H."/>
            <person name="Weirauch M."/>
            <person name="Cooper D.N."/>
            <person name="Stenson P.D."/>
            <person name="Ma B."/>
            <person name="Brent M."/>
            <person name="Arumugam M."/>
            <person name="Shteynberg D."/>
            <person name="Copley R.R."/>
            <person name="Taylor M.S."/>
            <person name="Riethman H."/>
            <person name="Mudunuri U."/>
            <person name="Peterson J."/>
            <person name="Guyer M."/>
            <person name="Felsenfeld A."/>
            <person name="Old S."/>
            <person name="Mockrin S."/>
            <person name="Collins F.S."/>
        </authorList>
    </citation>
    <scope>NUCLEOTIDE SEQUENCE [LARGE SCALE GENOMIC DNA]</scope>
    <source>
        <strain evidence="6">Brown Norway</strain>
    </source>
</reference>
<reference key="2">
    <citation type="journal article" date="2004" name="Genome Res.">
        <title>The status, quality, and expansion of the NIH full-length cDNA project: the Mammalian Gene Collection (MGC).</title>
        <authorList>
            <consortium name="The MGC Project Team"/>
        </authorList>
    </citation>
    <scope>NUCLEOTIDE SEQUENCE [LARGE SCALE MRNA] (ISOFORM 2)</scope>
    <source>
        <tissue>Testis</tissue>
    </source>
</reference>
<protein>
    <recommendedName>
        <fullName evidence="7">Cation channel sperm-associated auxiliary subunit delta</fullName>
        <shortName>CatSper-delta</shortName>
        <shortName>CatSperdelta</shortName>
    </recommendedName>
    <alternativeName>
        <fullName>Transmembrane protein 146</fullName>
    </alternativeName>
</protein>
<dbReference type="EMBL" id="AABR07066520">
    <property type="status" value="NOT_ANNOTATED_CDS"/>
    <property type="molecule type" value="Genomic_DNA"/>
</dbReference>
<dbReference type="EMBL" id="AABR07066522">
    <property type="status" value="NOT_ANNOTATED_CDS"/>
    <property type="molecule type" value="Genomic_DNA"/>
</dbReference>
<dbReference type="EMBL" id="AABR07066521">
    <property type="status" value="NOT_ANNOTATED_CDS"/>
    <property type="molecule type" value="Genomic_DNA"/>
</dbReference>
<dbReference type="EMBL" id="BC169121">
    <property type="protein sequence ID" value="AAI69121.1"/>
    <property type="molecule type" value="mRNA"/>
</dbReference>
<dbReference type="RefSeq" id="NP_001128456.1">
    <molecule id="B5DFM7-2"/>
    <property type="nucleotide sequence ID" value="NM_001134984.2"/>
</dbReference>
<dbReference type="RefSeq" id="NP_001419933.1">
    <molecule id="B5DFM7-1"/>
    <property type="nucleotide sequence ID" value="NM_001433004.1"/>
</dbReference>
<dbReference type="RefSeq" id="XP_006244402.1">
    <property type="nucleotide sequence ID" value="XM_006244340.2"/>
</dbReference>
<dbReference type="SMR" id="B5DFM7"/>
<dbReference type="FunCoup" id="B5DFM7">
    <property type="interactions" value="24"/>
</dbReference>
<dbReference type="STRING" id="10116.ENSRNOP00000067404"/>
<dbReference type="GlyCosmos" id="B5DFM7">
    <property type="glycosylation" value="7 sites, No reported glycans"/>
</dbReference>
<dbReference type="GlyGen" id="B5DFM7">
    <property type="glycosylation" value="7 sites"/>
</dbReference>
<dbReference type="PhosphoSitePlus" id="B5DFM7"/>
<dbReference type="PaxDb" id="10116-ENSRNOP00000067404"/>
<dbReference type="GeneID" id="680264"/>
<dbReference type="KEGG" id="rno:680264"/>
<dbReference type="AGR" id="RGD:1594167"/>
<dbReference type="CTD" id="257062"/>
<dbReference type="RGD" id="1594167">
    <property type="gene designation" value="Catsperd"/>
</dbReference>
<dbReference type="VEuPathDB" id="HostDB:ENSRNOG00000048818"/>
<dbReference type="eggNOG" id="ENOG502QSPE">
    <property type="taxonomic scope" value="Eukaryota"/>
</dbReference>
<dbReference type="HOGENOM" id="CLU_019182_0_0_1"/>
<dbReference type="InParanoid" id="B5DFM7"/>
<dbReference type="OrthoDB" id="39058at9989"/>
<dbReference type="PhylomeDB" id="B5DFM7"/>
<dbReference type="Reactome" id="R-RNO-1300642">
    <property type="pathway name" value="Sperm Motility And Taxes"/>
</dbReference>
<dbReference type="PRO" id="PR:B5DFM7"/>
<dbReference type="Proteomes" id="UP000002494">
    <property type="component" value="Chromosome 9"/>
</dbReference>
<dbReference type="Bgee" id="ENSRNOG00000048818">
    <property type="expression patterns" value="Expressed in testis and 14 other cell types or tissues"/>
</dbReference>
<dbReference type="GO" id="GO:0036128">
    <property type="term" value="C:CatSper complex"/>
    <property type="evidence" value="ECO:0000250"/>
    <property type="project" value="UniProtKB"/>
</dbReference>
<dbReference type="GO" id="GO:0097228">
    <property type="term" value="C:sperm principal piece"/>
    <property type="evidence" value="ECO:0000250"/>
    <property type="project" value="UniProtKB"/>
</dbReference>
<dbReference type="GO" id="GO:0030317">
    <property type="term" value="P:flagellated sperm motility"/>
    <property type="evidence" value="ECO:0000250"/>
    <property type="project" value="UniProtKB"/>
</dbReference>
<dbReference type="GO" id="GO:0048240">
    <property type="term" value="P:sperm capacitation"/>
    <property type="evidence" value="ECO:0000250"/>
    <property type="project" value="UniProtKB"/>
</dbReference>
<dbReference type="GO" id="GO:0007283">
    <property type="term" value="P:spermatogenesis"/>
    <property type="evidence" value="ECO:0000250"/>
    <property type="project" value="UniProtKB"/>
</dbReference>
<dbReference type="InterPro" id="IPR028751">
    <property type="entry name" value="CATSPERD/E"/>
</dbReference>
<dbReference type="InterPro" id="IPR053814">
    <property type="entry name" value="CATSPERD/E_C"/>
</dbReference>
<dbReference type="InterPro" id="IPR053813">
    <property type="entry name" value="CATSPERD_b-prop"/>
</dbReference>
<dbReference type="InterPro" id="IPR055451">
    <property type="entry name" value="Ig-like_CATSPERD"/>
</dbReference>
<dbReference type="PANTHER" id="PTHR33722:SF1">
    <property type="entry name" value="CATION CHANNEL SPERM-ASSOCIATED AUXILIARY SUBUNIT DELTA"/>
    <property type="match status" value="1"/>
</dbReference>
<dbReference type="PANTHER" id="PTHR33722">
    <property type="entry name" value="CATION CHANNEL SPERM-ASSOCIATED PROTEIN SUBUNIT DELTA-RELATED"/>
    <property type="match status" value="1"/>
</dbReference>
<dbReference type="Pfam" id="PF15020">
    <property type="entry name" value="Beta-prop_CATSPERD"/>
    <property type="match status" value="1"/>
</dbReference>
<dbReference type="Pfam" id="PF22850">
    <property type="entry name" value="CATSPERD-E_C"/>
    <property type="match status" value="1"/>
</dbReference>
<dbReference type="Pfam" id="PF23747">
    <property type="entry name" value="Ig-like_CATSPERD"/>
    <property type="match status" value="1"/>
</dbReference>
<name>CTSRD_RAT</name>